<sequence>MHEGYKVKLDTFEGPLDLLLHLINQFEIDIYDIPVAQITQQYMEYIHTMQHLELNIASEYLVMASTLLAIKSQMLLPKQELEDDLDEEYMEDPREELMQRLIEYRKYKEIAERLKEKESEDNQLYTRPPVVFEFKDIPEKITTNQTDISIFDMVGALKNMLKRKEWTEPHDTTVQRMDIPIETRMKEVLQQVQSNSDGLVFDKLFPSPTKNYIVVTFVAVLELMKDKQIYAVQERHFEELYLYSMEEST</sequence>
<dbReference type="EMBL" id="BA000028">
    <property type="protein sequence ID" value="BAC13784.1"/>
    <property type="molecule type" value="Genomic_DNA"/>
</dbReference>
<dbReference type="RefSeq" id="WP_011066226.1">
    <property type="nucleotide sequence ID" value="NC_004193.1"/>
</dbReference>
<dbReference type="SMR" id="Q7ZAM4"/>
<dbReference type="STRING" id="221109.gene:10734068"/>
<dbReference type="KEGG" id="oih:OB1828"/>
<dbReference type="eggNOG" id="COG1354">
    <property type="taxonomic scope" value="Bacteria"/>
</dbReference>
<dbReference type="HOGENOM" id="CLU_038686_3_1_9"/>
<dbReference type="OrthoDB" id="9811016at2"/>
<dbReference type="PhylomeDB" id="Q7ZAM4"/>
<dbReference type="Proteomes" id="UP000000822">
    <property type="component" value="Chromosome"/>
</dbReference>
<dbReference type="GO" id="GO:0005737">
    <property type="term" value="C:cytoplasm"/>
    <property type="evidence" value="ECO:0007669"/>
    <property type="project" value="UniProtKB-SubCell"/>
</dbReference>
<dbReference type="GO" id="GO:0051301">
    <property type="term" value="P:cell division"/>
    <property type="evidence" value="ECO:0007669"/>
    <property type="project" value="UniProtKB-KW"/>
</dbReference>
<dbReference type="GO" id="GO:0007059">
    <property type="term" value="P:chromosome segregation"/>
    <property type="evidence" value="ECO:0007669"/>
    <property type="project" value="UniProtKB-UniRule"/>
</dbReference>
<dbReference type="GO" id="GO:0006260">
    <property type="term" value="P:DNA replication"/>
    <property type="evidence" value="ECO:0007669"/>
    <property type="project" value="UniProtKB-UniRule"/>
</dbReference>
<dbReference type="Gene3D" id="6.10.250.2410">
    <property type="match status" value="1"/>
</dbReference>
<dbReference type="Gene3D" id="1.10.10.580">
    <property type="entry name" value="Structural maintenance of chromosome 1. Chain E"/>
    <property type="match status" value="1"/>
</dbReference>
<dbReference type="HAMAP" id="MF_01805">
    <property type="entry name" value="ScpA"/>
    <property type="match status" value="1"/>
</dbReference>
<dbReference type="InterPro" id="IPR003768">
    <property type="entry name" value="ScpA"/>
</dbReference>
<dbReference type="InterPro" id="IPR023093">
    <property type="entry name" value="ScpA-like_C"/>
</dbReference>
<dbReference type="NCBIfam" id="NF000995">
    <property type="entry name" value="PRK00104.1-4"/>
    <property type="match status" value="1"/>
</dbReference>
<dbReference type="PANTHER" id="PTHR33969">
    <property type="entry name" value="SEGREGATION AND CONDENSATION PROTEIN A"/>
    <property type="match status" value="1"/>
</dbReference>
<dbReference type="PANTHER" id="PTHR33969:SF2">
    <property type="entry name" value="SEGREGATION AND CONDENSATION PROTEIN A"/>
    <property type="match status" value="1"/>
</dbReference>
<dbReference type="Pfam" id="PF02616">
    <property type="entry name" value="SMC_ScpA"/>
    <property type="match status" value="1"/>
</dbReference>
<name>SCPA_OCEIH</name>
<proteinExistence type="inferred from homology"/>
<feature type="chain" id="PRO_0000211099" description="Segregation and condensation protein A">
    <location>
        <begin position="1"/>
        <end position="249"/>
    </location>
</feature>
<organism>
    <name type="scientific">Oceanobacillus iheyensis (strain DSM 14371 / CIP 107618 / JCM 11309 / KCTC 3954 / HTE831)</name>
    <dbReference type="NCBI Taxonomy" id="221109"/>
    <lineage>
        <taxon>Bacteria</taxon>
        <taxon>Bacillati</taxon>
        <taxon>Bacillota</taxon>
        <taxon>Bacilli</taxon>
        <taxon>Bacillales</taxon>
        <taxon>Bacillaceae</taxon>
        <taxon>Oceanobacillus</taxon>
    </lineage>
</organism>
<protein>
    <recommendedName>
        <fullName evidence="1">Segregation and condensation protein A</fullName>
    </recommendedName>
</protein>
<accession>Q7ZAM4</accession>
<reference key="1">
    <citation type="journal article" date="2002" name="Nucleic Acids Res.">
        <title>Genome sequence of Oceanobacillus iheyensis isolated from the Iheya Ridge and its unexpected adaptive capabilities to extreme environments.</title>
        <authorList>
            <person name="Takami H."/>
            <person name="Takaki Y."/>
            <person name="Uchiyama I."/>
        </authorList>
    </citation>
    <scope>NUCLEOTIDE SEQUENCE [LARGE SCALE GENOMIC DNA]</scope>
    <source>
        <strain>DSM 14371 / CIP 107618 / JCM 11309 / KCTC 3954 / HTE831</strain>
    </source>
</reference>
<gene>
    <name evidence="1" type="primary">scpA</name>
    <name type="ordered locus">OB1828</name>
</gene>
<keyword id="KW-0131">Cell cycle</keyword>
<keyword id="KW-0132">Cell division</keyword>
<keyword id="KW-0159">Chromosome partition</keyword>
<keyword id="KW-0963">Cytoplasm</keyword>
<keyword id="KW-1185">Reference proteome</keyword>
<comment type="function">
    <text evidence="1">Participates in chromosomal partition during cell division. May act via the formation of a condensin-like complex containing Smc and ScpB that pull DNA away from mid-cell into both cell halves.</text>
</comment>
<comment type="subunit">
    <text evidence="1">Component of a cohesin-like complex composed of ScpA, ScpB and the Smc homodimer, in which ScpA and ScpB bind to the head domain of Smc. The presence of the three proteins is required for the association of the complex with DNA.</text>
</comment>
<comment type="subcellular location">
    <subcellularLocation>
        <location evidence="1">Cytoplasm</location>
    </subcellularLocation>
    <text evidence="1">Associated with two foci at the outer edges of the nucleoid region in young cells, and at four foci within both cell halves in older cells.</text>
</comment>
<comment type="similarity">
    <text evidence="1">Belongs to the ScpA family.</text>
</comment>
<evidence type="ECO:0000255" key="1">
    <source>
        <dbReference type="HAMAP-Rule" id="MF_01805"/>
    </source>
</evidence>